<sequence length="187" mass="20633">MSRIGKRPITVPKGVQVTIGEQNLVTVKGPKGTLTQKLHPDMIIKQEGDVITVQRPSDEKLHRSLHGLTRTLINNMIVGVTQGWQRALEINGVGYRAQLEGKTLVLNLGFSHPVRIEPPPNISYIVGERKSANDPLSLTVVGIDKQQVGEEAARIRSLRPPEPYKGKGIKYLEEKIRRKAGKAGKAK</sequence>
<reference key="1">
    <citation type="submission" date="2008-12" db="EMBL/GenBank/DDBJ databases">
        <title>Complete sequence of Chloroflexus aggregans DSM 9485.</title>
        <authorList>
            <consortium name="US DOE Joint Genome Institute"/>
            <person name="Lucas S."/>
            <person name="Copeland A."/>
            <person name="Lapidus A."/>
            <person name="Glavina del Rio T."/>
            <person name="Dalin E."/>
            <person name="Tice H."/>
            <person name="Pitluck S."/>
            <person name="Foster B."/>
            <person name="Larimer F."/>
            <person name="Land M."/>
            <person name="Hauser L."/>
            <person name="Kyrpides N."/>
            <person name="Mikhailova N."/>
            <person name="Bryant D.A."/>
            <person name="Richardson P."/>
        </authorList>
    </citation>
    <scope>NUCLEOTIDE SEQUENCE [LARGE SCALE GENOMIC DNA]</scope>
    <source>
        <strain>MD-66 / DSM 9485</strain>
    </source>
</reference>
<proteinExistence type="inferred from homology"/>
<gene>
    <name evidence="1" type="primary">rplF</name>
    <name type="ordered locus">Cagg_3009</name>
</gene>
<comment type="function">
    <text evidence="1">This protein binds to the 23S rRNA, and is important in its secondary structure. It is located near the subunit interface in the base of the L7/L12 stalk, and near the tRNA binding site of the peptidyltransferase center.</text>
</comment>
<comment type="subunit">
    <text evidence="1">Part of the 50S ribosomal subunit.</text>
</comment>
<comment type="similarity">
    <text evidence="1">Belongs to the universal ribosomal protein uL6 family.</text>
</comment>
<name>RL6_CHLAD</name>
<protein>
    <recommendedName>
        <fullName evidence="1">Large ribosomal subunit protein uL6</fullName>
    </recommendedName>
    <alternativeName>
        <fullName evidence="2">50S ribosomal protein L6</fullName>
    </alternativeName>
</protein>
<keyword id="KW-0687">Ribonucleoprotein</keyword>
<keyword id="KW-0689">Ribosomal protein</keyword>
<keyword id="KW-0694">RNA-binding</keyword>
<keyword id="KW-0699">rRNA-binding</keyword>
<feature type="chain" id="PRO_1000166797" description="Large ribosomal subunit protein uL6">
    <location>
        <begin position="1"/>
        <end position="187"/>
    </location>
</feature>
<accession>B8G6R0</accession>
<organism>
    <name type="scientific">Chloroflexus aggregans (strain MD-66 / DSM 9485)</name>
    <dbReference type="NCBI Taxonomy" id="326427"/>
    <lineage>
        <taxon>Bacteria</taxon>
        <taxon>Bacillati</taxon>
        <taxon>Chloroflexota</taxon>
        <taxon>Chloroflexia</taxon>
        <taxon>Chloroflexales</taxon>
        <taxon>Chloroflexineae</taxon>
        <taxon>Chloroflexaceae</taxon>
        <taxon>Chloroflexus</taxon>
    </lineage>
</organism>
<evidence type="ECO:0000255" key="1">
    <source>
        <dbReference type="HAMAP-Rule" id="MF_01365"/>
    </source>
</evidence>
<evidence type="ECO:0000305" key="2"/>
<dbReference type="EMBL" id="CP001337">
    <property type="protein sequence ID" value="ACL25869.1"/>
    <property type="molecule type" value="Genomic_DNA"/>
</dbReference>
<dbReference type="RefSeq" id="WP_015941723.1">
    <property type="nucleotide sequence ID" value="NC_011831.1"/>
</dbReference>
<dbReference type="SMR" id="B8G6R0"/>
<dbReference type="STRING" id="326427.Cagg_3009"/>
<dbReference type="KEGG" id="cag:Cagg_3009"/>
<dbReference type="eggNOG" id="COG0097">
    <property type="taxonomic scope" value="Bacteria"/>
</dbReference>
<dbReference type="HOGENOM" id="CLU_065464_1_2_0"/>
<dbReference type="OrthoDB" id="9805007at2"/>
<dbReference type="Proteomes" id="UP000002508">
    <property type="component" value="Chromosome"/>
</dbReference>
<dbReference type="GO" id="GO:0022625">
    <property type="term" value="C:cytosolic large ribosomal subunit"/>
    <property type="evidence" value="ECO:0007669"/>
    <property type="project" value="TreeGrafter"/>
</dbReference>
<dbReference type="GO" id="GO:0019843">
    <property type="term" value="F:rRNA binding"/>
    <property type="evidence" value="ECO:0007669"/>
    <property type="project" value="UniProtKB-UniRule"/>
</dbReference>
<dbReference type="GO" id="GO:0003735">
    <property type="term" value="F:structural constituent of ribosome"/>
    <property type="evidence" value="ECO:0007669"/>
    <property type="project" value="InterPro"/>
</dbReference>
<dbReference type="GO" id="GO:0002181">
    <property type="term" value="P:cytoplasmic translation"/>
    <property type="evidence" value="ECO:0007669"/>
    <property type="project" value="TreeGrafter"/>
</dbReference>
<dbReference type="FunFam" id="3.90.930.12:FF:000001">
    <property type="entry name" value="50S ribosomal protein L6"/>
    <property type="match status" value="1"/>
</dbReference>
<dbReference type="FunFam" id="3.90.930.12:FF:000002">
    <property type="entry name" value="50S ribosomal protein L6"/>
    <property type="match status" value="1"/>
</dbReference>
<dbReference type="Gene3D" id="3.90.930.12">
    <property type="entry name" value="Ribosomal protein L6, alpha-beta domain"/>
    <property type="match status" value="2"/>
</dbReference>
<dbReference type="HAMAP" id="MF_01365_B">
    <property type="entry name" value="Ribosomal_uL6_B"/>
    <property type="match status" value="1"/>
</dbReference>
<dbReference type="InterPro" id="IPR000702">
    <property type="entry name" value="Ribosomal_uL6-like"/>
</dbReference>
<dbReference type="InterPro" id="IPR036789">
    <property type="entry name" value="Ribosomal_uL6-like_a/b-dom_sf"/>
</dbReference>
<dbReference type="InterPro" id="IPR020040">
    <property type="entry name" value="Ribosomal_uL6_a/b-dom"/>
</dbReference>
<dbReference type="InterPro" id="IPR019906">
    <property type="entry name" value="Ribosomal_uL6_bac-type"/>
</dbReference>
<dbReference type="InterPro" id="IPR002358">
    <property type="entry name" value="Ribosomal_uL6_CS"/>
</dbReference>
<dbReference type="NCBIfam" id="TIGR03654">
    <property type="entry name" value="L6_bact"/>
    <property type="match status" value="1"/>
</dbReference>
<dbReference type="PANTHER" id="PTHR11655">
    <property type="entry name" value="60S/50S RIBOSOMAL PROTEIN L6/L9"/>
    <property type="match status" value="1"/>
</dbReference>
<dbReference type="PANTHER" id="PTHR11655:SF14">
    <property type="entry name" value="LARGE RIBOSOMAL SUBUNIT PROTEIN UL6M"/>
    <property type="match status" value="1"/>
</dbReference>
<dbReference type="Pfam" id="PF00347">
    <property type="entry name" value="Ribosomal_L6"/>
    <property type="match status" value="2"/>
</dbReference>
<dbReference type="PIRSF" id="PIRSF002162">
    <property type="entry name" value="Ribosomal_L6"/>
    <property type="match status" value="1"/>
</dbReference>
<dbReference type="PRINTS" id="PR00059">
    <property type="entry name" value="RIBOSOMALL6"/>
</dbReference>
<dbReference type="SUPFAM" id="SSF56053">
    <property type="entry name" value="Ribosomal protein L6"/>
    <property type="match status" value="2"/>
</dbReference>
<dbReference type="PROSITE" id="PS00525">
    <property type="entry name" value="RIBOSOMAL_L6_1"/>
    <property type="match status" value="1"/>
</dbReference>